<reference key="1">
    <citation type="journal article" date="1996" name="Plant Mol. Biol.">
        <title>A recombinant wheat serpin with inhibitory activity.</title>
        <authorList>
            <person name="Rasmussen S.K."/>
            <person name="Dahl S.W."/>
            <person name="Noergaard A."/>
            <person name="Hejgaard J."/>
        </authorList>
    </citation>
    <scope>NUCLEOTIDE SEQUENCE [MRNA]</scope>
    <scope>FUNCTION</scope>
    <source>
        <strain>cv. Chinese Spring</strain>
        <tissue>Grain</tissue>
    </source>
</reference>
<reference key="2">
    <citation type="journal article" date="1996" name="J. Biol. Chem.">
        <title>Heterologous expression of three plant serpins with distinct inhibitory specificities.</title>
        <authorList>
            <person name="Dahl S.W."/>
            <person name="Rasmussen S.K."/>
            <person name="Hejgaard J."/>
        </authorList>
    </citation>
    <scope>PARTIAL PROTEIN SEQUENCE</scope>
    <scope>FUNCTION</scope>
</reference>
<reference key="3">
    <citation type="journal article" date="2000" name="J. Biol. Chem.">
        <title>Inhibitory serpins from wheat grain with reactive centers resembling glutamine-rich repeats of prolamin storage proteins. Cloning and characterization of five major molecular forms.</title>
        <authorList>
            <person name="Oestergaard H."/>
            <person name="Rasmussen S.K."/>
            <person name="Roberts T.H."/>
            <person name="Hejgaard J."/>
        </authorList>
    </citation>
    <scope>PARTIAL PROTEIN SEQUENCE</scope>
    <scope>FUNCTION</scope>
</reference>
<reference key="4">
    <citation type="journal article" date="1994" name="FEBS Lett.">
        <title>Serpins from wheat grain.</title>
        <authorList>
            <person name="Rosenkrands I."/>
            <person name="Hejgaard J."/>
            <person name="Rasmussen S.K."/>
            <person name="Bjoern S.E."/>
        </authorList>
    </citation>
    <scope>FUNCTION</scope>
</reference>
<accession>Q41593</accession>
<protein>
    <recommendedName>
        <fullName>Serpin-Z1A</fullName>
    </recommendedName>
    <alternativeName>
        <fullName>TriaeZ1a</fullName>
    </alternativeName>
    <alternativeName>
        <fullName>WSZ1a</fullName>
        <shortName>WSZ1</shortName>
    </alternativeName>
    <alternativeName>
        <fullName>WSZCI</fullName>
    </alternativeName>
</protein>
<evidence type="ECO:0000250" key="1"/>
<evidence type="ECO:0000269" key="2">
    <source>
    </source>
</evidence>
<evidence type="ECO:0000269" key="3">
    <source>
    </source>
</evidence>
<evidence type="ECO:0000269" key="4">
    <source>
    </source>
</evidence>
<evidence type="ECO:0000269" key="5">
    <source>
    </source>
</evidence>
<evidence type="ECO:0000305" key="6"/>
<dbReference type="EMBL" id="Z49890">
    <property type="protein sequence ID" value="CAA90071.1"/>
    <property type="molecule type" value="mRNA"/>
</dbReference>
<dbReference type="PIR" id="S65782">
    <property type="entry name" value="S65782"/>
</dbReference>
<dbReference type="SMR" id="Q41593"/>
<dbReference type="STRING" id="4565.Q41593"/>
<dbReference type="Allergome" id="5724">
    <property type="allergen name" value="Tri a 33"/>
</dbReference>
<dbReference type="MEROPS" id="I04.032"/>
<dbReference type="Proteomes" id="UP000019116">
    <property type="component" value="Unplaced"/>
</dbReference>
<dbReference type="ExpressionAtlas" id="Q41593">
    <property type="expression patterns" value="baseline"/>
</dbReference>
<dbReference type="GO" id="GO:0005615">
    <property type="term" value="C:extracellular space"/>
    <property type="evidence" value="ECO:0000318"/>
    <property type="project" value="GO_Central"/>
</dbReference>
<dbReference type="GO" id="GO:0004867">
    <property type="term" value="F:serine-type endopeptidase inhibitor activity"/>
    <property type="evidence" value="ECO:0007669"/>
    <property type="project" value="UniProtKB-KW"/>
</dbReference>
<dbReference type="CDD" id="cd02043">
    <property type="entry name" value="serpinP_plants"/>
    <property type="match status" value="1"/>
</dbReference>
<dbReference type="Gene3D" id="2.30.39.10">
    <property type="entry name" value="Alpha-1-antitrypsin, domain 1"/>
    <property type="match status" value="1"/>
</dbReference>
<dbReference type="Gene3D" id="3.30.497.10">
    <property type="entry name" value="Antithrombin, subunit I, domain 2"/>
    <property type="match status" value="1"/>
</dbReference>
<dbReference type="InterPro" id="IPR023795">
    <property type="entry name" value="Serpin_CS"/>
</dbReference>
<dbReference type="InterPro" id="IPR023796">
    <property type="entry name" value="Serpin_dom"/>
</dbReference>
<dbReference type="InterPro" id="IPR000215">
    <property type="entry name" value="Serpin_fam"/>
</dbReference>
<dbReference type="InterPro" id="IPR036186">
    <property type="entry name" value="Serpin_sf"/>
</dbReference>
<dbReference type="InterPro" id="IPR042178">
    <property type="entry name" value="Serpin_sf_1"/>
</dbReference>
<dbReference type="InterPro" id="IPR042185">
    <property type="entry name" value="Serpin_sf_2"/>
</dbReference>
<dbReference type="PANTHER" id="PTHR11461">
    <property type="entry name" value="SERINE PROTEASE INHIBITOR, SERPIN"/>
    <property type="match status" value="1"/>
</dbReference>
<dbReference type="PANTHER" id="PTHR11461:SF317">
    <property type="entry name" value="SERPIN-Z1C"/>
    <property type="match status" value="1"/>
</dbReference>
<dbReference type="Pfam" id="PF00079">
    <property type="entry name" value="Serpin"/>
    <property type="match status" value="1"/>
</dbReference>
<dbReference type="SMART" id="SM00093">
    <property type="entry name" value="SERPIN"/>
    <property type="match status" value="1"/>
</dbReference>
<dbReference type="SUPFAM" id="SSF56574">
    <property type="entry name" value="Serpins"/>
    <property type="match status" value="1"/>
</dbReference>
<dbReference type="PROSITE" id="PS00284">
    <property type="entry name" value="SERPIN"/>
    <property type="match status" value="1"/>
</dbReference>
<proteinExistence type="evidence at protein level"/>
<sequence length="398" mass="43118">MATTLATDVRLSIAHQTRFALRLASTISSNPKSAASNAAFSPVSLYSALSLLAAGAGSATRDQLVATLGTGKVEGLHALAEQVVQFVLADASSTGGSACRFANGVFVDASLLLKPSFQEIAVCKYKAETQSVDFQTKAAEVTTQVNSWVEKVTSGRIKDILPPGSIDNTTKLVLANALYFKGAWTEQFDSYGTKNDYFYLLDGSSVQTPFMSSMDDQYLLSSDGLKVLKLPYKQGGDNRQFFMYILLPEAPGGLSSLAEKLSAEPDFLERHIPRQRVALRQFKLPKFKISFGIEASDLLKCLGLQLPFGDEADFSEMVDSLMPQGLRVSSVFHQAFVEVNEQGTEAAASTAIKMVLQQARPPSVMDFIADHPFLFLVREDISGVVLFMGHVVNPLLSS</sequence>
<comment type="function">
    <text evidence="2 3 4 5">Inhibits chymotrypsin and cathepsin G in vitro.</text>
</comment>
<comment type="domain">
    <text evidence="1">The reactive center loop (RCL) extends out from the body of the protein and directs binding to the target protease. The protease cleaves the serpin at the reactive site within the RCL, establishing a covalent linkage between the carboxyl group of the serpin reactive site and the serine hydroxyl of the protease. The resulting inactive serpin-protease complex is highly stable (By similarity).</text>
</comment>
<comment type="similarity">
    <text evidence="6">Belongs to the serpin family.</text>
</comment>
<gene>
    <name type="primary">WZCI</name>
</gene>
<feature type="chain" id="PRO_0000334568" description="Serpin-Z1A">
    <location>
        <begin position="1"/>
        <end position="398"/>
    </location>
</feature>
<feature type="region of interest" description="RCL">
    <location>
        <begin position="343"/>
        <end position="367"/>
    </location>
</feature>
<feature type="site" description="Reactive bond">
    <location>
        <begin position="357"/>
        <end position="358"/>
    </location>
</feature>
<name>SPZ1A_WHEAT</name>
<keyword id="KW-0903">Direct protein sequencing</keyword>
<keyword id="KW-0646">Protease inhibitor</keyword>
<keyword id="KW-1185">Reference proteome</keyword>
<keyword id="KW-0722">Serine protease inhibitor</keyword>
<organism>
    <name type="scientific">Triticum aestivum</name>
    <name type="common">Wheat</name>
    <dbReference type="NCBI Taxonomy" id="4565"/>
    <lineage>
        <taxon>Eukaryota</taxon>
        <taxon>Viridiplantae</taxon>
        <taxon>Streptophyta</taxon>
        <taxon>Embryophyta</taxon>
        <taxon>Tracheophyta</taxon>
        <taxon>Spermatophyta</taxon>
        <taxon>Magnoliopsida</taxon>
        <taxon>Liliopsida</taxon>
        <taxon>Poales</taxon>
        <taxon>Poaceae</taxon>
        <taxon>BOP clade</taxon>
        <taxon>Pooideae</taxon>
        <taxon>Triticodae</taxon>
        <taxon>Triticeae</taxon>
        <taxon>Triticinae</taxon>
        <taxon>Triticum</taxon>
    </lineage>
</organism>